<accession>Q6D7W3</accession>
<organism>
    <name type="scientific">Pectobacterium atrosepticum (strain SCRI 1043 / ATCC BAA-672)</name>
    <name type="common">Erwinia carotovora subsp. atroseptica</name>
    <dbReference type="NCBI Taxonomy" id="218491"/>
    <lineage>
        <taxon>Bacteria</taxon>
        <taxon>Pseudomonadati</taxon>
        <taxon>Pseudomonadota</taxon>
        <taxon>Gammaproteobacteria</taxon>
        <taxon>Enterobacterales</taxon>
        <taxon>Pectobacteriaceae</taxon>
        <taxon>Pectobacterium</taxon>
    </lineage>
</organism>
<reference key="1">
    <citation type="journal article" date="2004" name="Proc. Natl. Acad. Sci. U.S.A.">
        <title>Genome sequence of the enterobacterial phytopathogen Erwinia carotovora subsp. atroseptica and characterization of virulence factors.</title>
        <authorList>
            <person name="Bell K.S."/>
            <person name="Sebaihia M."/>
            <person name="Pritchard L."/>
            <person name="Holden M.T.G."/>
            <person name="Hyman L.J."/>
            <person name="Holeva M.C."/>
            <person name="Thomson N.R."/>
            <person name="Bentley S.D."/>
            <person name="Churcher L.J.C."/>
            <person name="Mungall K."/>
            <person name="Atkin R."/>
            <person name="Bason N."/>
            <person name="Brooks K."/>
            <person name="Chillingworth T."/>
            <person name="Clark K."/>
            <person name="Doggett J."/>
            <person name="Fraser A."/>
            <person name="Hance Z."/>
            <person name="Hauser H."/>
            <person name="Jagels K."/>
            <person name="Moule S."/>
            <person name="Norbertczak H."/>
            <person name="Ormond D."/>
            <person name="Price C."/>
            <person name="Quail M.A."/>
            <person name="Sanders M."/>
            <person name="Walker D."/>
            <person name="Whitehead S."/>
            <person name="Salmond G.P.C."/>
            <person name="Birch P.R.J."/>
            <person name="Parkhill J."/>
            <person name="Toth I.K."/>
        </authorList>
    </citation>
    <scope>NUCLEOTIDE SEQUENCE [LARGE SCALE GENOMIC DNA]</scope>
    <source>
        <strain>SCRI 1043 / ATCC BAA-672</strain>
    </source>
</reference>
<name>MENH_PECAS</name>
<gene>
    <name evidence="2" type="primary">menH</name>
    <name type="ordered locus">ECA1212</name>
</gene>
<protein>
    <recommendedName>
        <fullName evidence="2">2-succinyl-6-hydroxy-2,4-cyclohexadiene-1-carboxylate synthase</fullName>
        <shortName evidence="2">SHCHC synthase</shortName>
        <ecNumber evidence="2">4.2.99.20</ecNumber>
    </recommendedName>
</protein>
<keyword id="KW-0456">Lyase</keyword>
<keyword id="KW-0474">Menaquinone biosynthesis</keyword>
<keyword id="KW-1185">Reference proteome</keyword>
<comment type="function">
    <text evidence="2">Catalyzes a proton abstraction reaction that results in 2,5-elimination of pyruvate from 2-succinyl-5-enolpyruvyl-6-hydroxy-3-cyclohexene-1-carboxylate (SEPHCHC) and the formation of 2-succinyl-6-hydroxy-2,4-cyclohexadiene-1-carboxylate (SHCHC).</text>
</comment>
<comment type="catalytic activity">
    <reaction evidence="2">
        <text>5-enolpyruvoyl-6-hydroxy-2-succinyl-cyclohex-3-ene-1-carboxylate = (1R,6R)-6-hydroxy-2-succinyl-cyclohexa-2,4-diene-1-carboxylate + pyruvate</text>
        <dbReference type="Rhea" id="RHEA:25597"/>
        <dbReference type="ChEBI" id="CHEBI:15361"/>
        <dbReference type="ChEBI" id="CHEBI:58689"/>
        <dbReference type="ChEBI" id="CHEBI:58818"/>
        <dbReference type="EC" id="4.2.99.20"/>
    </reaction>
</comment>
<comment type="pathway">
    <text evidence="2">Quinol/quinone metabolism; 1,4-dihydroxy-2-naphthoate biosynthesis; 1,4-dihydroxy-2-naphthoate from chorismate: step 3/7.</text>
</comment>
<comment type="pathway">
    <text evidence="2">Quinol/quinone metabolism; menaquinone biosynthesis.</text>
</comment>
<comment type="subunit">
    <text evidence="2">Monomer.</text>
</comment>
<comment type="similarity">
    <text evidence="2">Belongs to the AB hydrolase superfamily. MenH family.</text>
</comment>
<evidence type="ECO:0000255" key="1"/>
<evidence type="ECO:0000255" key="2">
    <source>
        <dbReference type="HAMAP-Rule" id="MF_01660"/>
    </source>
</evidence>
<feature type="chain" id="PRO_0000341904" description="2-succinyl-6-hydroxy-2,4-cyclohexadiene-1-carboxylate synthase">
    <location>
        <begin position="1"/>
        <end position="253"/>
    </location>
</feature>
<feature type="domain" description="AB hydrolase-1" evidence="1">
    <location>
        <begin position="11"/>
        <end position="147"/>
    </location>
</feature>
<dbReference type="EC" id="4.2.99.20" evidence="2"/>
<dbReference type="EMBL" id="BX950851">
    <property type="protein sequence ID" value="CAG74122.1"/>
    <property type="molecule type" value="Genomic_DNA"/>
</dbReference>
<dbReference type="SMR" id="Q6D7W3"/>
<dbReference type="STRING" id="218491.ECA1212"/>
<dbReference type="ESTHER" id="erwct-q6d7w3">
    <property type="family name" value="MenH_SHCHC"/>
</dbReference>
<dbReference type="KEGG" id="eca:ECA1212"/>
<dbReference type="eggNOG" id="COG0596">
    <property type="taxonomic scope" value="Bacteria"/>
</dbReference>
<dbReference type="HOGENOM" id="CLU_020336_38_2_6"/>
<dbReference type="UniPathway" id="UPA00079"/>
<dbReference type="UniPathway" id="UPA01057">
    <property type="reaction ID" value="UER00900"/>
</dbReference>
<dbReference type="Proteomes" id="UP000007966">
    <property type="component" value="Chromosome"/>
</dbReference>
<dbReference type="GO" id="GO:0070205">
    <property type="term" value="F:2-succinyl-6-hydroxy-2,4-cyclohexadiene-1-carboxylate synthase activity"/>
    <property type="evidence" value="ECO:0007669"/>
    <property type="project" value="UniProtKB-UniRule"/>
</dbReference>
<dbReference type="GO" id="GO:0009234">
    <property type="term" value="P:menaquinone biosynthetic process"/>
    <property type="evidence" value="ECO:0007669"/>
    <property type="project" value="UniProtKB-UniRule"/>
</dbReference>
<dbReference type="Gene3D" id="3.40.50.1820">
    <property type="entry name" value="alpha/beta hydrolase"/>
    <property type="match status" value="1"/>
</dbReference>
<dbReference type="HAMAP" id="MF_01660">
    <property type="entry name" value="MenH"/>
    <property type="match status" value="1"/>
</dbReference>
<dbReference type="InterPro" id="IPR000073">
    <property type="entry name" value="AB_hydrolase_1"/>
</dbReference>
<dbReference type="InterPro" id="IPR029058">
    <property type="entry name" value="AB_hydrolase_fold"/>
</dbReference>
<dbReference type="InterPro" id="IPR022485">
    <property type="entry name" value="SHCHC_synthase_MenH"/>
</dbReference>
<dbReference type="NCBIfam" id="TIGR03695">
    <property type="entry name" value="menH_SHCHC"/>
    <property type="match status" value="1"/>
</dbReference>
<dbReference type="NCBIfam" id="NF008340">
    <property type="entry name" value="PRK11126.1"/>
    <property type="match status" value="1"/>
</dbReference>
<dbReference type="PANTHER" id="PTHR42916">
    <property type="entry name" value="2-SUCCINYL-5-ENOLPYRUVYL-6-HYDROXY-3-CYCLOHEXENE-1-CARBOXYLATE SYNTHASE"/>
    <property type="match status" value="1"/>
</dbReference>
<dbReference type="PANTHER" id="PTHR42916:SF1">
    <property type="entry name" value="PROTEIN PHYLLO, CHLOROPLASTIC"/>
    <property type="match status" value="1"/>
</dbReference>
<dbReference type="Pfam" id="PF00561">
    <property type="entry name" value="Abhydrolase_1"/>
    <property type="match status" value="1"/>
</dbReference>
<dbReference type="SUPFAM" id="SSF53474">
    <property type="entry name" value="alpha/beta-Hydrolases"/>
    <property type="match status" value="1"/>
</dbReference>
<sequence>MTHGAVAPIQPWLVCLHGLFGSGEDWSPVLPFFRDWPMLLVDLPGHGASRAITTADFAEVSRQLTATLLEQGIERYWLLGYSLGGRIAMYHACEGHHDGMLGLLVEGGHPGLATPEQRTERIHHDARWAQRFRQDPLPEALQDWYQQAVFADIDSVQREQLIARRSANHGASVAAMLEATSLGRQPFLAARLQHLSIPFIYLCGASDVKFQTLAAQYGLPLLSVALAGHNAHQANPAAYAERVRTFLSHPVKD</sequence>
<proteinExistence type="inferred from homology"/>